<feature type="chain" id="PRO_0000178975" description="GTPase Der">
    <location>
        <begin position="1"/>
        <end position="453"/>
    </location>
</feature>
<feature type="domain" description="EngA-type G 1">
    <location>
        <begin position="3"/>
        <end position="167"/>
    </location>
</feature>
<feature type="domain" description="EngA-type G 2">
    <location>
        <begin position="188"/>
        <end position="361"/>
    </location>
</feature>
<feature type="domain" description="KH-like" evidence="1">
    <location>
        <begin position="362"/>
        <end position="446"/>
    </location>
</feature>
<feature type="binding site" evidence="1">
    <location>
        <begin position="9"/>
        <end position="16"/>
    </location>
    <ligand>
        <name>GTP</name>
        <dbReference type="ChEBI" id="CHEBI:37565"/>
        <label>1</label>
    </ligand>
</feature>
<feature type="binding site" evidence="1">
    <location>
        <begin position="57"/>
        <end position="61"/>
    </location>
    <ligand>
        <name>GTP</name>
        <dbReference type="ChEBI" id="CHEBI:37565"/>
        <label>1</label>
    </ligand>
</feature>
<feature type="binding site" evidence="1">
    <location>
        <begin position="119"/>
        <end position="122"/>
    </location>
    <ligand>
        <name>GTP</name>
        <dbReference type="ChEBI" id="CHEBI:37565"/>
        <label>1</label>
    </ligand>
</feature>
<feature type="binding site" evidence="1">
    <location>
        <begin position="194"/>
        <end position="201"/>
    </location>
    <ligand>
        <name>GTP</name>
        <dbReference type="ChEBI" id="CHEBI:37565"/>
        <label>2</label>
    </ligand>
</feature>
<feature type="binding site" evidence="1">
    <location>
        <begin position="241"/>
        <end position="245"/>
    </location>
    <ligand>
        <name>GTP</name>
        <dbReference type="ChEBI" id="CHEBI:37565"/>
        <label>2</label>
    </ligand>
</feature>
<feature type="binding site" evidence="1">
    <location>
        <begin position="306"/>
        <end position="309"/>
    </location>
    <ligand>
        <name>GTP</name>
        <dbReference type="ChEBI" id="CHEBI:37565"/>
        <label>2</label>
    </ligand>
</feature>
<name>DER_BUCAP</name>
<evidence type="ECO:0000255" key="1">
    <source>
        <dbReference type="HAMAP-Rule" id="MF_00195"/>
    </source>
</evidence>
<sequence length="453" mass="52048">MLPIIVLIGRTNVGKSTLFNILSKTRNALVADYPGLTRDRNYGYCYLKENKKITIVDTAGINFKSQKIEKQSHEQTLKAIKECDGILFLVNARDGVMPEEYEISRKIRKYEKKTILVINKIDGIKEISKINEFYSLGFKENIKISASHNQGINNLISKYLTPWINSKFKEKKLEKISQEHSKKEKNSVKIACIGKPNVGKSTLINSLLMKKRMITSNKAGTTLDTVLVPIKYNYKNYIFIDTAGMSKKKSKTNKIEKFCKIKTLQTIEKSHLTLLIIDAKDQISKQDLLLSSFIEKSGKPLIIVINKCDLLSLKEKKNLENLIKKQLKCNFFSKIHFISALNNEGTVELFKSIDTSYHTSQKKIKTSQVMKIMHKAVKKHQPPIINGRRIKLKYAHLGNSNPIEIMIHGNQVKNLSLCYKKYLKNFFYKTLKMNGTPIKIQFKETMNPYISKK</sequence>
<proteinExistence type="inferred from homology"/>
<reference key="1">
    <citation type="journal article" date="1998" name="Curr. Microbiol.">
        <title>Sequence analysis of a 34.7-kb DNA segment from the genome of Buchnera aphidicola (endosymbiont of aphids) containing groEL, dnaA, the atp operon, gidA, and rho.</title>
        <authorList>
            <person name="Clark M.A."/>
            <person name="Baumann L."/>
            <person name="Baumann P."/>
        </authorList>
    </citation>
    <scope>NUCLEOTIDE SEQUENCE [GENOMIC DNA]</scope>
</reference>
<reference key="2">
    <citation type="journal article" date="2002" name="Science">
        <title>50 million years of genomic stasis in endosymbiotic bacteria.</title>
        <authorList>
            <person name="Tamas I."/>
            <person name="Klasson L."/>
            <person name="Canbaeck B."/>
            <person name="Naeslund A.K."/>
            <person name="Eriksson A.-S."/>
            <person name="Wernegreen J.J."/>
            <person name="Sandstroem J.P."/>
            <person name="Moran N.A."/>
            <person name="Andersson S.G.E."/>
        </authorList>
    </citation>
    <scope>NUCLEOTIDE SEQUENCE [LARGE SCALE GENOMIC DNA]</scope>
    <source>
        <strain>Sg</strain>
    </source>
</reference>
<gene>
    <name evidence="1" type="primary">der</name>
    <name type="synonym">engA</name>
    <name type="ordered locus">BUsg_582</name>
</gene>
<comment type="function">
    <text evidence="1">GTPase that plays an essential role in the late steps of ribosome biogenesis.</text>
</comment>
<comment type="subunit">
    <text evidence="1">Associates with the 50S ribosomal subunit.</text>
</comment>
<comment type="similarity">
    <text evidence="1">Belongs to the TRAFAC class TrmE-Era-EngA-EngB-Septin-like GTPase superfamily. EngA (Der) GTPase family.</text>
</comment>
<dbReference type="EMBL" id="AF008210">
    <property type="protein sequence ID" value="AAC38119.1"/>
    <property type="molecule type" value="Genomic_DNA"/>
</dbReference>
<dbReference type="EMBL" id="AE013218">
    <property type="protein sequence ID" value="AAM68116.1"/>
    <property type="molecule type" value="Genomic_DNA"/>
</dbReference>
<dbReference type="RefSeq" id="WP_011054082.1">
    <property type="nucleotide sequence ID" value="NC_004061.1"/>
</dbReference>
<dbReference type="SMR" id="O51881"/>
<dbReference type="STRING" id="198804.BUsg_582"/>
<dbReference type="GeneID" id="93004064"/>
<dbReference type="KEGG" id="bas:BUsg_582"/>
<dbReference type="eggNOG" id="COG1160">
    <property type="taxonomic scope" value="Bacteria"/>
</dbReference>
<dbReference type="HOGENOM" id="CLU_016077_5_1_6"/>
<dbReference type="Proteomes" id="UP000000416">
    <property type="component" value="Chromosome"/>
</dbReference>
<dbReference type="GO" id="GO:0005525">
    <property type="term" value="F:GTP binding"/>
    <property type="evidence" value="ECO:0007669"/>
    <property type="project" value="UniProtKB-UniRule"/>
</dbReference>
<dbReference type="GO" id="GO:0043022">
    <property type="term" value="F:ribosome binding"/>
    <property type="evidence" value="ECO:0007669"/>
    <property type="project" value="TreeGrafter"/>
</dbReference>
<dbReference type="GO" id="GO:0042254">
    <property type="term" value="P:ribosome biogenesis"/>
    <property type="evidence" value="ECO:0007669"/>
    <property type="project" value="UniProtKB-KW"/>
</dbReference>
<dbReference type="CDD" id="cd01894">
    <property type="entry name" value="EngA1"/>
    <property type="match status" value="1"/>
</dbReference>
<dbReference type="CDD" id="cd01895">
    <property type="entry name" value="EngA2"/>
    <property type="match status" value="1"/>
</dbReference>
<dbReference type="FunFam" id="3.30.300.20:FF:000004">
    <property type="entry name" value="GTPase Der"/>
    <property type="match status" value="1"/>
</dbReference>
<dbReference type="Gene3D" id="3.30.300.20">
    <property type="match status" value="1"/>
</dbReference>
<dbReference type="Gene3D" id="3.40.50.300">
    <property type="entry name" value="P-loop containing nucleotide triphosphate hydrolases"/>
    <property type="match status" value="2"/>
</dbReference>
<dbReference type="HAMAP" id="MF_00195">
    <property type="entry name" value="GTPase_Der"/>
    <property type="match status" value="1"/>
</dbReference>
<dbReference type="InterPro" id="IPR031166">
    <property type="entry name" value="G_ENGA"/>
</dbReference>
<dbReference type="InterPro" id="IPR006073">
    <property type="entry name" value="GTP-bd"/>
</dbReference>
<dbReference type="InterPro" id="IPR016484">
    <property type="entry name" value="GTPase_Der"/>
</dbReference>
<dbReference type="InterPro" id="IPR032859">
    <property type="entry name" value="KH_dom-like"/>
</dbReference>
<dbReference type="InterPro" id="IPR015946">
    <property type="entry name" value="KH_dom-like_a/b"/>
</dbReference>
<dbReference type="InterPro" id="IPR027417">
    <property type="entry name" value="P-loop_NTPase"/>
</dbReference>
<dbReference type="InterPro" id="IPR005225">
    <property type="entry name" value="Small_GTP-bd"/>
</dbReference>
<dbReference type="NCBIfam" id="TIGR03594">
    <property type="entry name" value="GTPase_EngA"/>
    <property type="match status" value="1"/>
</dbReference>
<dbReference type="NCBIfam" id="TIGR00231">
    <property type="entry name" value="small_GTP"/>
    <property type="match status" value="2"/>
</dbReference>
<dbReference type="PANTHER" id="PTHR43834">
    <property type="entry name" value="GTPASE DER"/>
    <property type="match status" value="1"/>
</dbReference>
<dbReference type="PANTHER" id="PTHR43834:SF6">
    <property type="entry name" value="GTPASE DER"/>
    <property type="match status" value="1"/>
</dbReference>
<dbReference type="Pfam" id="PF14714">
    <property type="entry name" value="KH_dom-like"/>
    <property type="match status" value="1"/>
</dbReference>
<dbReference type="Pfam" id="PF01926">
    <property type="entry name" value="MMR_HSR1"/>
    <property type="match status" value="2"/>
</dbReference>
<dbReference type="PIRSF" id="PIRSF006485">
    <property type="entry name" value="GTP-binding_EngA"/>
    <property type="match status" value="1"/>
</dbReference>
<dbReference type="PRINTS" id="PR00326">
    <property type="entry name" value="GTP1OBG"/>
</dbReference>
<dbReference type="SUPFAM" id="SSF52540">
    <property type="entry name" value="P-loop containing nucleoside triphosphate hydrolases"/>
    <property type="match status" value="2"/>
</dbReference>
<dbReference type="PROSITE" id="PS51712">
    <property type="entry name" value="G_ENGA"/>
    <property type="match status" value="2"/>
</dbReference>
<protein>
    <recommendedName>
        <fullName evidence="1">GTPase Der</fullName>
    </recommendedName>
    <alternativeName>
        <fullName evidence="1">GTP-binding protein EngA</fullName>
    </alternativeName>
</protein>
<organism>
    <name type="scientific">Buchnera aphidicola subsp. Schizaphis graminum (strain Sg)</name>
    <dbReference type="NCBI Taxonomy" id="198804"/>
    <lineage>
        <taxon>Bacteria</taxon>
        <taxon>Pseudomonadati</taxon>
        <taxon>Pseudomonadota</taxon>
        <taxon>Gammaproteobacteria</taxon>
        <taxon>Enterobacterales</taxon>
        <taxon>Erwiniaceae</taxon>
        <taxon>Buchnera</taxon>
    </lineage>
</organism>
<keyword id="KW-0342">GTP-binding</keyword>
<keyword id="KW-0547">Nucleotide-binding</keyword>
<keyword id="KW-0677">Repeat</keyword>
<keyword id="KW-0690">Ribosome biogenesis</keyword>
<accession>O51881</accession>